<accession>P0A8P0</accession>
<accession>P03812</accession>
<accession>P78141</accession>
<accession>Q8XDP9</accession>
<comment type="function">
    <text evidence="1">With EpmB is involved in the beta-lysylation step of the post-translational modification of translation elongation factor P (EF-P) on 'Lys-34'. Catalyzes the ATP-dependent activation of (R)-beta-lysine produced by EpmB, forming a lysyl-adenylate, from which the beta-lysyl moiety is then transferred to the epsilon-amino group of EF-P 'Lys-34'.</text>
</comment>
<comment type="catalytic activity">
    <reaction evidence="1">
        <text>D-beta-lysine + L-lysyl-[protein] + ATP = N(6)-((3R)-3,6-diaminohexanoyl)-L-lysyl-[protein] + AMP + diphosphate + H(+)</text>
        <dbReference type="Rhea" id="RHEA:83435"/>
        <dbReference type="Rhea" id="RHEA-COMP:9752"/>
        <dbReference type="Rhea" id="RHEA-COMP:20131"/>
        <dbReference type="ChEBI" id="CHEBI:15378"/>
        <dbReference type="ChEBI" id="CHEBI:29969"/>
        <dbReference type="ChEBI" id="CHEBI:30616"/>
        <dbReference type="ChEBI" id="CHEBI:33019"/>
        <dbReference type="ChEBI" id="CHEBI:84138"/>
        <dbReference type="ChEBI" id="CHEBI:156053"/>
        <dbReference type="ChEBI" id="CHEBI:456215"/>
    </reaction>
    <physiologicalReaction direction="left-to-right" evidence="1">
        <dbReference type="Rhea" id="RHEA:83436"/>
    </physiologicalReaction>
</comment>
<comment type="subunit">
    <text evidence="1">Homodimer.</text>
</comment>
<comment type="similarity">
    <text evidence="1">Belongs to the class-II aminoacyl-tRNA synthetase family. EpmA subfamily.</text>
</comment>
<gene>
    <name evidence="1" type="primary">epmA</name>
    <name type="synonym">yjeA</name>
    <name type="ordered locus">SF4313</name>
    <name type="ordered locus">S4578</name>
</gene>
<organism>
    <name type="scientific">Shigella flexneri</name>
    <dbReference type="NCBI Taxonomy" id="623"/>
    <lineage>
        <taxon>Bacteria</taxon>
        <taxon>Pseudomonadati</taxon>
        <taxon>Pseudomonadota</taxon>
        <taxon>Gammaproteobacteria</taxon>
        <taxon>Enterobacterales</taxon>
        <taxon>Enterobacteriaceae</taxon>
        <taxon>Shigella</taxon>
    </lineage>
</organism>
<dbReference type="EC" id="6.3.2.-" evidence="1"/>
<dbReference type="EMBL" id="AE005674">
    <property type="protein sequence ID" value="AAN45731.1"/>
    <property type="molecule type" value="Genomic_DNA"/>
</dbReference>
<dbReference type="EMBL" id="AE014073">
    <property type="protein sequence ID" value="AAP19515.1"/>
    <property type="molecule type" value="Genomic_DNA"/>
</dbReference>
<dbReference type="RefSeq" id="NP_710024.1">
    <property type="nucleotide sequence ID" value="NC_004337.2"/>
</dbReference>
<dbReference type="RefSeq" id="WP_000004771.1">
    <property type="nucleotide sequence ID" value="NZ_WPGW01000002.1"/>
</dbReference>
<dbReference type="SMR" id="P0A8P0"/>
<dbReference type="STRING" id="198214.SF4313"/>
<dbReference type="PaxDb" id="198214-SF4313"/>
<dbReference type="GeneID" id="1025474"/>
<dbReference type="GeneID" id="93777667"/>
<dbReference type="KEGG" id="sfl:SF4313"/>
<dbReference type="KEGG" id="sfx:S4578"/>
<dbReference type="PATRIC" id="fig|198214.7.peg.5084"/>
<dbReference type="HOGENOM" id="CLU_008255_1_1_6"/>
<dbReference type="Proteomes" id="UP000001006">
    <property type="component" value="Chromosome"/>
</dbReference>
<dbReference type="Proteomes" id="UP000002673">
    <property type="component" value="Chromosome"/>
</dbReference>
<dbReference type="GO" id="GO:0005829">
    <property type="term" value="C:cytosol"/>
    <property type="evidence" value="ECO:0007669"/>
    <property type="project" value="TreeGrafter"/>
</dbReference>
<dbReference type="GO" id="GO:0016880">
    <property type="term" value="F:acid-ammonia (or amide) ligase activity"/>
    <property type="evidence" value="ECO:0007669"/>
    <property type="project" value="UniProtKB-UniRule"/>
</dbReference>
<dbReference type="GO" id="GO:0005524">
    <property type="term" value="F:ATP binding"/>
    <property type="evidence" value="ECO:0007669"/>
    <property type="project" value="UniProtKB-UniRule"/>
</dbReference>
<dbReference type="GO" id="GO:0004824">
    <property type="term" value="F:lysine-tRNA ligase activity"/>
    <property type="evidence" value="ECO:0007669"/>
    <property type="project" value="InterPro"/>
</dbReference>
<dbReference type="GO" id="GO:0000049">
    <property type="term" value="F:tRNA binding"/>
    <property type="evidence" value="ECO:0007669"/>
    <property type="project" value="TreeGrafter"/>
</dbReference>
<dbReference type="GO" id="GO:0006430">
    <property type="term" value="P:lysyl-tRNA aminoacylation"/>
    <property type="evidence" value="ECO:0007669"/>
    <property type="project" value="InterPro"/>
</dbReference>
<dbReference type="FunFam" id="3.30.930.10:FF:000017">
    <property type="entry name" value="Elongation factor P--(R)-beta-lysine ligase"/>
    <property type="match status" value="1"/>
</dbReference>
<dbReference type="Gene3D" id="3.30.930.10">
    <property type="entry name" value="Bira Bifunctional Protein, Domain 2"/>
    <property type="match status" value="1"/>
</dbReference>
<dbReference type="HAMAP" id="MF_00174">
    <property type="entry name" value="EF_P_modif_A"/>
    <property type="match status" value="1"/>
</dbReference>
<dbReference type="InterPro" id="IPR004364">
    <property type="entry name" value="Aa-tRNA-synt_II"/>
</dbReference>
<dbReference type="InterPro" id="IPR006195">
    <property type="entry name" value="aa-tRNA-synth_II"/>
</dbReference>
<dbReference type="InterPro" id="IPR045864">
    <property type="entry name" value="aa-tRNA-synth_II/BPL/LPL"/>
</dbReference>
<dbReference type="InterPro" id="IPR004525">
    <property type="entry name" value="EpmA"/>
</dbReference>
<dbReference type="InterPro" id="IPR018149">
    <property type="entry name" value="Lys-tRNA-synth_II_C"/>
</dbReference>
<dbReference type="NCBIfam" id="TIGR00462">
    <property type="entry name" value="genX"/>
    <property type="match status" value="1"/>
</dbReference>
<dbReference type="NCBIfam" id="NF006828">
    <property type="entry name" value="PRK09350.1"/>
    <property type="match status" value="1"/>
</dbReference>
<dbReference type="PANTHER" id="PTHR42918:SF6">
    <property type="entry name" value="ELONGATION FACTOR P--(R)-BETA-LYSINE LIGASE"/>
    <property type="match status" value="1"/>
</dbReference>
<dbReference type="PANTHER" id="PTHR42918">
    <property type="entry name" value="LYSYL-TRNA SYNTHETASE"/>
    <property type="match status" value="1"/>
</dbReference>
<dbReference type="Pfam" id="PF00152">
    <property type="entry name" value="tRNA-synt_2"/>
    <property type="match status" value="1"/>
</dbReference>
<dbReference type="PRINTS" id="PR00982">
    <property type="entry name" value="TRNASYNTHLYS"/>
</dbReference>
<dbReference type="SUPFAM" id="SSF55681">
    <property type="entry name" value="Class II aaRS and biotin synthetases"/>
    <property type="match status" value="1"/>
</dbReference>
<dbReference type="PROSITE" id="PS50862">
    <property type="entry name" value="AA_TRNA_LIGASE_II"/>
    <property type="match status" value="1"/>
</dbReference>
<evidence type="ECO:0000255" key="1">
    <source>
        <dbReference type="HAMAP-Rule" id="MF_00174"/>
    </source>
</evidence>
<feature type="chain" id="PRO_0000152729" description="Elongation factor P--(R)-beta-lysine ligase">
    <location>
        <begin position="1"/>
        <end position="325"/>
    </location>
</feature>
<feature type="binding site" evidence="1">
    <location>
        <begin position="76"/>
        <end position="78"/>
    </location>
    <ligand>
        <name>substrate</name>
    </ligand>
</feature>
<feature type="binding site" evidence="1">
    <location>
        <begin position="100"/>
        <end position="102"/>
    </location>
    <ligand>
        <name>ATP</name>
        <dbReference type="ChEBI" id="CHEBI:30616"/>
    </ligand>
</feature>
<feature type="binding site" evidence="1">
    <location>
        <position position="109"/>
    </location>
    <ligand>
        <name>ATP</name>
        <dbReference type="ChEBI" id="CHEBI:30616"/>
    </ligand>
</feature>
<feature type="binding site" evidence="1">
    <location>
        <position position="118"/>
    </location>
    <ligand>
        <name>substrate</name>
    </ligand>
</feature>
<feature type="binding site" evidence="1">
    <location>
        <begin position="244"/>
        <end position="245"/>
    </location>
    <ligand>
        <name>ATP</name>
        <dbReference type="ChEBI" id="CHEBI:30616"/>
    </ligand>
</feature>
<feature type="binding site" evidence="1">
    <location>
        <position position="251"/>
    </location>
    <ligand>
        <name>substrate</name>
    </ligand>
</feature>
<feature type="binding site" evidence="1">
    <location>
        <position position="300"/>
    </location>
    <ligand>
        <name>ATP</name>
        <dbReference type="ChEBI" id="CHEBI:30616"/>
    </ligand>
</feature>
<reference key="1">
    <citation type="journal article" date="2002" name="Nucleic Acids Res.">
        <title>Genome sequence of Shigella flexneri 2a: insights into pathogenicity through comparison with genomes of Escherichia coli K12 and O157.</title>
        <authorList>
            <person name="Jin Q."/>
            <person name="Yuan Z."/>
            <person name="Xu J."/>
            <person name="Wang Y."/>
            <person name="Shen Y."/>
            <person name="Lu W."/>
            <person name="Wang J."/>
            <person name="Liu H."/>
            <person name="Yang J."/>
            <person name="Yang F."/>
            <person name="Zhang X."/>
            <person name="Zhang J."/>
            <person name="Yang G."/>
            <person name="Wu H."/>
            <person name="Qu D."/>
            <person name="Dong J."/>
            <person name="Sun L."/>
            <person name="Xue Y."/>
            <person name="Zhao A."/>
            <person name="Gao Y."/>
            <person name="Zhu J."/>
            <person name="Kan B."/>
            <person name="Ding K."/>
            <person name="Chen S."/>
            <person name="Cheng H."/>
            <person name="Yao Z."/>
            <person name="He B."/>
            <person name="Chen R."/>
            <person name="Ma D."/>
            <person name="Qiang B."/>
            <person name="Wen Y."/>
            <person name="Hou Y."/>
            <person name="Yu J."/>
        </authorList>
    </citation>
    <scope>NUCLEOTIDE SEQUENCE [LARGE SCALE GENOMIC DNA]</scope>
    <source>
        <strain>301 / Serotype 2a</strain>
    </source>
</reference>
<reference key="2">
    <citation type="journal article" date="2003" name="Infect. Immun.">
        <title>Complete genome sequence and comparative genomics of Shigella flexneri serotype 2a strain 2457T.</title>
        <authorList>
            <person name="Wei J."/>
            <person name="Goldberg M.B."/>
            <person name="Burland V."/>
            <person name="Venkatesan M.M."/>
            <person name="Deng W."/>
            <person name="Fournier G."/>
            <person name="Mayhew G.F."/>
            <person name="Plunkett G. III"/>
            <person name="Rose D.J."/>
            <person name="Darling A."/>
            <person name="Mau B."/>
            <person name="Perna N.T."/>
            <person name="Payne S.M."/>
            <person name="Runyen-Janecky L.J."/>
            <person name="Zhou S."/>
            <person name="Schwartz D.C."/>
            <person name="Blattner F.R."/>
        </authorList>
    </citation>
    <scope>NUCLEOTIDE SEQUENCE [LARGE SCALE GENOMIC DNA]</scope>
    <source>
        <strain>ATCC 700930 / 2457T / Serotype 2a</strain>
    </source>
</reference>
<sequence length="325" mass="36976">MSETASWQPSASIPNLLKRAAIMAEIRRFFADRGVLEVETPCMSQATVTDIHLVPFETRFVGPGHSQGMNLWLMTSPEYHMKRLLVAGCGPVFQLCRSFRNEEMGRYHNPEFTMLEWYRPHYDMYRLMNEVDDLLQQVLDCPAAESLSYQQAFLRYLEIDPLSADKTQLREVAAKLDLSNVADTEEDRDTLLQLLFTFGVEPNIGKEKPTFVYHFPASQASLAQISTEDHRVAERFEVYYKGIELANGFHELTDAREQQQRFEQDNRKRAARGLPQHPIDQNLIEALKVGMPDCSGVALGVDRLVMLALGAETLAEVIAFSVDRA</sequence>
<protein>
    <recommendedName>
        <fullName evidence="1">Elongation factor P--(R)-beta-lysine ligase</fullName>
        <shortName evidence="1">EF-P--(R)-beta-lysine ligase</shortName>
        <ecNumber evidence="1">6.3.2.-</ecNumber>
    </recommendedName>
    <alternativeName>
        <fullName evidence="1">EF-P post-translational modification enzyme A</fullName>
    </alternativeName>
    <alternativeName>
        <fullName evidence="1">EF-P-lysine lysyltransferase</fullName>
    </alternativeName>
</protein>
<keyword id="KW-0067">ATP-binding</keyword>
<keyword id="KW-0436">Ligase</keyword>
<keyword id="KW-0547">Nucleotide-binding</keyword>
<keyword id="KW-1185">Reference proteome</keyword>
<name>EPMA_SHIFL</name>
<proteinExistence type="inferred from homology"/>